<comment type="similarity">
    <text evidence="1">Belongs to the SlyX family.</text>
</comment>
<proteinExistence type="inferred from homology"/>
<gene>
    <name evidence="1" type="primary">slyX</name>
    <name type="ordered locus">PBPRA0306</name>
</gene>
<name>SLYX_PHOPR</name>
<dbReference type="EMBL" id="CR378663">
    <property type="protein sequence ID" value="CAG18745.1"/>
    <property type="molecule type" value="Genomic_DNA"/>
</dbReference>
<dbReference type="SMR" id="Q6LVD0"/>
<dbReference type="STRING" id="298386.PBPRA0306"/>
<dbReference type="KEGG" id="ppr:PBPRA0306"/>
<dbReference type="eggNOG" id="COG2900">
    <property type="taxonomic scope" value="Bacteria"/>
</dbReference>
<dbReference type="HOGENOM" id="CLU_180796_4_0_6"/>
<dbReference type="Proteomes" id="UP000000593">
    <property type="component" value="Chromosome 1"/>
</dbReference>
<dbReference type="Gene3D" id="1.20.5.300">
    <property type="match status" value="1"/>
</dbReference>
<dbReference type="HAMAP" id="MF_00715">
    <property type="entry name" value="SlyX"/>
    <property type="match status" value="1"/>
</dbReference>
<dbReference type="InterPro" id="IPR007236">
    <property type="entry name" value="SlyX"/>
</dbReference>
<dbReference type="PANTHER" id="PTHR36508">
    <property type="entry name" value="PROTEIN SLYX"/>
    <property type="match status" value="1"/>
</dbReference>
<dbReference type="PANTHER" id="PTHR36508:SF1">
    <property type="entry name" value="PROTEIN SLYX"/>
    <property type="match status" value="1"/>
</dbReference>
<dbReference type="Pfam" id="PF04102">
    <property type="entry name" value="SlyX"/>
    <property type="match status" value="1"/>
</dbReference>
<organism>
    <name type="scientific">Photobacterium profundum (strain SS9)</name>
    <dbReference type="NCBI Taxonomy" id="298386"/>
    <lineage>
        <taxon>Bacteria</taxon>
        <taxon>Pseudomonadati</taxon>
        <taxon>Pseudomonadota</taxon>
        <taxon>Gammaproteobacteria</taxon>
        <taxon>Vibrionales</taxon>
        <taxon>Vibrionaceae</taxon>
        <taxon>Photobacterium</taxon>
    </lineage>
</organism>
<sequence>MVPNLMTDIEKLQVQVDELEMKQAFQEQTIDDLNEALTDQQFQFDKMQVQLKFLVGKVKGFQSSNMAEESEETPPPHY</sequence>
<accession>Q6LVD0</accession>
<reference key="1">
    <citation type="journal article" date="2005" name="Science">
        <title>Life at depth: Photobacterium profundum genome sequence and expression analysis.</title>
        <authorList>
            <person name="Vezzi A."/>
            <person name="Campanaro S."/>
            <person name="D'Angelo M."/>
            <person name="Simonato F."/>
            <person name="Vitulo N."/>
            <person name="Lauro F.M."/>
            <person name="Cestaro A."/>
            <person name="Malacrida G."/>
            <person name="Simionati B."/>
            <person name="Cannata N."/>
            <person name="Romualdi C."/>
            <person name="Bartlett D.H."/>
            <person name="Valle G."/>
        </authorList>
    </citation>
    <scope>NUCLEOTIDE SEQUENCE [LARGE SCALE GENOMIC DNA]</scope>
    <source>
        <strain>ATCC BAA-1253 / SS9</strain>
    </source>
</reference>
<keyword id="KW-1185">Reference proteome</keyword>
<evidence type="ECO:0000255" key="1">
    <source>
        <dbReference type="HAMAP-Rule" id="MF_00715"/>
    </source>
</evidence>
<feature type="chain" id="PRO_0000227071" description="Protein SlyX homolog">
    <location>
        <begin position="1"/>
        <end position="78"/>
    </location>
</feature>
<protein>
    <recommendedName>
        <fullName evidence="1">Protein SlyX homolog</fullName>
    </recommendedName>
</protein>